<evidence type="ECO:0000250" key="1">
    <source>
        <dbReference type="UniProtKB" id="P01942"/>
    </source>
</evidence>
<evidence type="ECO:0000250" key="2">
    <source>
        <dbReference type="UniProtKB" id="P69905"/>
    </source>
</evidence>
<evidence type="ECO:0000255" key="3">
    <source>
        <dbReference type="PROSITE-ProRule" id="PRU00238"/>
    </source>
</evidence>
<evidence type="ECO:0000269" key="4">
    <source>
    </source>
</evidence>
<accession>P01962</accession>
<keyword id="KW-0007">Acetylation</keyword>
<keyword id="KW-0903">Direct protein sequencing</keyword>
<keyword id="KW-0349">Heme</keyword>
<keyword id="KW-0408">Iron</keyword>
<keyword id="KW-0479">Metal-binding</keyword>
<keyword id="KW-0561">Oxygen transport</keyword>
<keyword id="KW-0597">Phosphoprotein</keyword>
<keyword id="KW-0813">Transport</keyword>
<sequence>VLSPTDKTNVKAAWSKVGSHAGEYGAEALERMFLGFPTTKTYFPHFDLSHGSAQVQAHGKKVGDALTQAVGHLDDLPGALSALSDLHAYKLRVDPVNFKLLSHCLLVTLALHHPDDFTPAIHASLDKFLSNVSTVLTSKYR</sequence>
<reference key="1">
    <citation type="journal article" date="1984" name="Hoppe-Seyler's Z. Physiol. Chem.">
        <title>Perissodactyla: the primary structure of hemoglobins from the lowland tapir (Tapirus terrestris): glutamic acid in position 2 of the beta chains.</title>
        <authorList>
            <person name="Mazur G."/>
            <person name="Braunitzer G."/>
        </authorList>
    </citation>
    <scope>PROTEIN SEQUENCE</scope>
</reference>
<dbReference type="PIR" id="A02285">
    <property type="entry name" value="HATPI"/>
</dbReference>
<dbReference type="PIR" id="A91727">
    <property type="entry name" value="HATP2B"/>
</dbReference>
<dbReference type="SMR" id="P01962"/>
<dbReference type="GO" id="GO:0072562">
    <property type="term" value="C:blood microparticle"/>
    <property type="evidence" value="ECO:0007669"/>
    <property type="project" value="TreeGrafter"/>
</dbReference>
<dbReference type="GO" id="GO:0031838">
    <property type="term" value="C:haptoglobin-hemoglobin complex"/>
    <property type="evidence" value="ECO:0007669"/>
    <property type="project" value="TreeGrafter"/>
</dbReference>
<dbReference type="GO" id="GO:0005833">
    <property type="term" value="C:hemoglobin complex"/>
    <property type="evidence" value="ECO:0007669"/>
    <property type="project" value="InterPro"/>
</dbReference>
<dbReference type="GO" id="GO:0031720">
    <property type="term" value="F:haptoglobin binding"/>
    <property type="evidence" value="ECO:0007669"/>
    <property type="project" value="TreeGrafter"/>
</dbReference>
<dbReference type="GO" id="GO:0020037">
    <property type="term" value="F:heme binding"/>
    <property type="evidence" value="ECO:0007669"/>
    <property type="project" value="InterPro"/>
</dbReference>
<dbReference type="GO" id="GO:0005506">
    <property type="term" value="F:iron ion binding"/>
    <property type="evidence" value="ECO:0007669"/>
    <property type="project" value="InterPro"/>
</dbReference>
<dbReference type="GO" id="GO:0043177">
    <property type="term" value="F:organic acid binding"/>
    <property type="evidence" value="ECO:0007669"/>
    <property type="project" value="TreeGrafter"/>
</dbReference>
<dbReference type="GO" id="GO:0019825">
    <property type="term" value="F:oxygen binding"/>
    <property type="evidence" value="ECO:0007669"/>
    <property type="project" value="InterPro"/>
</dbReference>
<dbReference type="GO" id="GO:0005344">
    <property type="term" value="F:oxygen carrier activity"/>
    <property type="evidence" value="ECO:0007669"/>
    <property type="project" value="UniProtKB-KW"/>
</dbReference>
<dbReference type="GO" id="GO:0004601">
    <property type="term" value="F:peroxidase activity"/>
    <property type="evidence" value="ECO:0007669"/>
    <property type="project" value="TreeGrafter"/>
</dbReference>
<dbReference type="GO" id="GO:0042744">
    <property type="term" value="P:hydrogen peroxide catabolic process"/>
    <property type="evidence" value="ECO:0007669"/>
    <property type="project" value="TreeGrafter"/>
</dbReference>
<dbReference type="CDD" id="cd08927">
    <property type="entry name" value="Hb-alpha-like"/>
    <property type="match status" value="1"/>
</dbReference>
<dbReference type="FunFam" id="1.10.490.10:FF:000002">
    <property type="entry name" value="Hemoglobin subunit alpha"/>
    <property type="match status" value="1"/>
</dbReference>
<dbReference type="Gene3D" id="1.10.490.10">
    <property type="entry name" value="Globins"/>
    <property type="match status" value="1"/>
</dbReference>
<dbReference type="InterPro" id="IPR000971">
    <property type="entry name" value="Globin"/>
</dbReference>
<dbReference type="InterPro" id="IPR009050">
    <property type="entry name" value="Globin-like_sf"/>
</dbReference>
<dbReference type="InterPro" id="IPR012292">
    <property type="entry name" value="Globin/Proto"/>
</dbReference>
<dbReference type="InterPro" id="IPR002338">
    <property type="entry name" value="Hemoglobin_a-typ"/>
</dbReference>
<dbReference type="InterPro" id="IPR050056">
    <property type="entry name" value="Hemoglobin_oxygen_transport"/>
</dbReference>
<dbReference type="InterPro" id="IPR002339">
    <property type="entry name" value="Hemoglobin_pi"/>
</dbReference>
<dbReference type="PANTHER" id="PTHR11442">
    <property type="entry name" value="HEMOGLOBIN FAMILY MEMBER"/>
    <property type="match status" value="1"/>
</dbReference>
<dbReference type="PANTHER" id="PTHR11442:SF48">
    <property type="entry name" value="HEMOGLOBIN SUBUNIT ALPHA"/>
    <property type="match status" value="1"/>
</dbReference>
<dbReference type="Pfam" id="PF00042">
    <property type="entry name" value="Globin"/>
    <property type="match status" value="1"/>
</dbReference>
<dbReference type="PRINTS" id="PR00612">
    <property type="entry name" value="ALPHAHAEM"/>
</dbReference>
<dbReference type="PRINTS" id="PR00815">
    <property type="entry name" value="PIHAEM"/>
</dbReference>
<dbReference type="SUPFAM" id="SSF46458">
    <property type="entry name" value="Globin-like"/>
    <property type="match status" value="1"/>
</dbReference>
<dbReference type="PROSITE" id="PS01033">
    <property type="entry name" value="GLOBIN"/>
    <property type="match status" value="1"/>
</dbReference>
<comment type="function">
    <text>Involved in oxygen transport from the lung to the various peripheral tissues.</text>
</comment>
<comment type="subunit">
    <text>Heterotetramer of two alpha chains and two beta chains.</text>
</comment>
<comment type="tissue specificity">
    <text>Red blood cells.</text>
</comment>
<comment type="polymorphism">
    <text evidence="4">There are two alleles. The sequence shown is that of alpha-1.</text>
</comment>
<comment type="similarity">
    <text evidence="3">Belongs to the globin family.</text>
</comment>
<name>HBA_TAPTE</name>
<feature type="chain" id="PRO_0000052778" description="Hemoglobin subunit alpha-1/2">
    <location>
        <begin position="1"/>
        <end position="141"/>
    </location>
</feature>
<feature type="domain" description="Globin" evidence="3">
    <location>
        <begin position="1"/>
        <end position="141"/>
    </location>
</feature>
<feature type="binding site" evidence="3">
    <location>
        <position position="58"/>
    </location>
    <ligand>
        <name>O2</name>
        <dbReference type="ChEBI" id="CHEBI:15379"/>
    </ligand>
</feature>
<feature type="binding site" description="proximal binding residue" evidence="3">
    <location>
        <position position="87"/>
    </location>
    <ligand>
        <name>heme b</name>
        <dbReference type="ChEBI" id="CHEBI:60344"/>
    </ligand>
    <ligandPart>
        <name>Fe</name>
        <dbReference type="ChEBI" id="CHEBI:18248"/>
    </ligandPart>
</feature>
<feature type="modified residue" description="Phosphoserine" evidence="2">
    <location>
        <position position="3"/>
    </location>
</feature>
<feature type="modified residue" description="N6-succinyllysine" evidence="1">
    <location>
        <position position="7"/>
    </location>
</feature>
<feature type="modified residue" description="Phosphothreonine" evidence="2">
    <location>
        <position position="8"/>
    </location>
</feature>
<feature type="modified residue" description="N6-succinyllysine" evidence="1">
    <location>
        <position position="11"/>
    </location>
</feature>
<feature type="modified residue" description="N6-acetyllysine; alternate" evidence="2">
    <location>
        <position position="16"/>
    </location>
</feature>
<feature type="modified residue" description="N6-succinyllysine; alternate" evidence="1">
    <location>
        <position position="16"/>
    </location>
</feature>
<feature type="modified residue" description="Phosphotyrosine" evidence="2">
    <location>
        <position position="24"/>
    </location>
</feature>
<feature type="modified residue" description="N6-succinyllysine" evidence="1">
    <location>
        <position position="40"/>
    </location>
</feature>
<feature type="modified residue" description="Phosphoserine" evidence="2">
    <location>
        <position position="49"/>
    </location>
</feature>
<feature type="modified residue" description="Phosphoserine" evidence="1">
    <location>
        <position position="102"/>
    </location>
</feature>
<feature type="modified residue" description="Phosphothreonine" evidence="1">
    <location>
        <position position="108"/>
    </location>
</feature>
<feature type="modified residue" description="Phosphoserine" evidence="1">
    <location>
        <position position="124"/>
    </location>
</feature>
<feature type="modified residue" description="Phosphothreonine" evidence="1">
    <location>
        <position position="134"/>
    </location>
</feature>
<feature type="modified residue" description="Phosphothreonine" evidence="1">
    <location>
        <position position="137"/>
    </location>
</feature>
<feature type="modified residue" description="Phosphoserine" evidence="1">
    <location>
        <position position="138"/>
    </location>
</feature>
<feature type="sequence variant" description="In alpha-2." evidence="4">
    <original>D</original>
    <variation>G</variation>
    <location>
        <position position="115"/>
    </location>
</feature>
<organism>
    <name type="scientific">Tapirus terrestris</name>
    <name type="common">Lowland tapir</name>
    <name type="synonym">Brazilian tapir</name>
    <dbReference type="NCBI Taxonomy" id="9801"/>
    <lineage>
        <taxon>Eukaryota</taxon>
        <taxon>Metazoa</taxon>
        <taxon>Chordata</taxon>
        <taxon>Craniata</taxon>
        <taxon>Vertebrata</taxon>
        <taxon>Euteleostomi</taxon>
        <taxon>Mammalia</taxon>
        <taxon>Eutheria</taxon>
        <taxon>Laurasiatheria</taxon>
        <taxon>Perissodactyla</taxon>
        <taxon>Tapiridae</taxon>
        <taxon>Tapirus</taxon>
    </lineage>
</organism>
<protein>
    <recommendedName>
        <fullName>Hemoglobin subunit alpha-1/2</fullName>
    </recommendedName>
    <alternativeName>
        <fullName>Alpha-1/2-globin</fullName>
    </alternativeName>
    <alternativeName>
        <fullName>Hemoglobin alpha-1/2 chain</fullName>
    </alternativeName>
</protein>
<proteinExistence type="evidence at protein level"/>